<comment type="function">
    <text evidence="1">Transports L-glutamate and also L- and D-aspartate. Essential for terminating the postsynaptic action of glutamate by rapidly removing released glutamate from the synaptic cleft. Acts as a symport by cotransporting sodium (By similarity).</text>
</comment>
<comment type="subcellular location">
    <subcellularLocation>
        <location>Membrane</location>
        <topology>Multi-pass membrane protein</topology>
    </subcellularLocation>
</comment>
<comment type="similarity">
    <text evidence="3">Belongs to the dicarboxylate/amino acid:cation symporter (DAACS) (TC 2.A.23) family.</text>
</comment>
<name>EAAT_ONCVO</name>
<sequence length="492" mass="53391">MVSWIRKNLLLVLTVSSVVLGALCGFLLRGLQLSPQNIMYISFPGELLMHMLKMMILPLIMSSLISGLAQLDARQSGKLGSLAVTYYMFTTAVAVVTGIFLVLVIHPGDPTIKKEIGTGTEGKTVSTVDTLLDLLRNMFPENVVQATFQQVQTKYIKVRPKVVKNNDSATLAALNNGSLDYVKASVEYTSGMNVLGVIVFCIAIGISLSQLGQEAHVMVQFFVIMDKVIMKLVMTVMWYSPFGILCLIMGKILEIHDLADTARMLAMYMVTVLSGLAIHSLISLPLIFFVTTKKNPYVFMRGLFQAWITGLGTASSSDTLPITYICLEENLGVDRRVTRFVLPVGATINMDGTALYEAVAAIFIAQINGVHLSFGQVVTVSLTATLASIGAASVPSAGLVTMLLVLTAVGLPVKDVSLIVAVDWLLDRIRTSINVLGDAMGAGIVYHYSKADLDAHDRLAATTRSHSIAMNDEKRQLAVYNSLPTDDEKHTH</sequence>
<evidence type="ECO:0000250" key="1"/>
<evidence type="ECO:0000255" key="2"/>
<evidence type="ECO:0000305" key="3"/>
<accession>Q25605</accession>
<feature type="chain" id="PRO_0000202078" description="Excitatory amino acid transporter">
    <location>
        <begin position="1"/>
        <end position="492"/>
    </location>
</feature>
<feature type="topological domain" description="Cytoplasmic" evidence="2">
    <location>
        <begin position="1"/>
        <end position="7"/>
    </location>
</feature>
<feature type="transmembrane region" description="Helical" evidence="2">
    <location>
        <begin position="8"/>
        <end position="28"/>
    </location>
</feature>
<feature type="transmembrane region" description="Helical" evidence="2">
    <location>
        <begin position="47"/>
        <end position="67"/>
    </location>
</feature>
<feature type="transmembrane region" description="Helical" evidence="2">
    <location>
        <begin position="85"/>
        <end position="105"/>
    </location>
</feature>
<feature type="topological domain" description="Extracellular" evidence="2">
    <location>
        <begin position="106"/>
        <end position="191"/>
    </location>
</feature>
<feature type="transmembrane region" description="Helical" evidence="2">
    <location>
        <begin position="192"/>
        <end position="212"/>
    </location>
</feature>
<feature type="transmembrane region" description="Helical" evidence="2">
    <location>
        <begin position="228"/>
        <end position="248"/>
    </location>
</feature>
<feature type="transmembrane region" description="Helical" evidence="2">
    <location>
        <begin position="270"/>
        <end position="290"/>
    </location>
</feature>
<feature type="transmembrane region" description="Helical" evidence="2">
    <location>
        <begin position="358"/>
        <end position="378"/>
    </location>
</feature>
<feature type="transmembrane region" description="Helical" evidence="2">
    <location>
        <begin position="389"/>
        <end position="409"/>
    </location>
</feature>
<feature type="glycosylation site" description="N-linked (GlcNAc...) asparagine" evidence="2">
    <location>
        <position position="166"/>
    </location>
</feature>
<feature type="glycosylation site" description="N-linked (GlcNAc...) asparagine" evidence="2">
    <location>
        <position position="176"/>
    </location>
</feature>
<proteinExistence type="evidence at transcript level"/>
<dbReference type="EMBL" id="U35251">
    <property type="protein sequence ID" value="AAB41937.1"/>
    <property type="molecule type" value="mRNA"/>
</dbReference>
<dbReference type="SMR" id="Q25605"/>
<dbReference type="STRING" id="6282.Q25605"/>
<dbReference type="GlyCosmos" id="Q25605">
    <property type="glycosylation" value="2 sites, No reported glycans"/>
</dbReference>
<dbReference type="Proteomes" id="UP000024404">
    <property type="component" value="Unassembled WGS sequence"/>
</dbReference>
<dbReference type="GO" id="GO:0005886">
    <property type="term" value="C:plasma membrane"/>
    <property type="evidence" value="ECO:0007669"/>
    <property type="project" value="TreeGrafter"/>
</dbReference>
<dbReference type="GO" id="GO:0015501">
    <property type="term" value="F:glutamate:sodium symporter activity"/>
    <property type="evidence" value="ECO:0007669"/>
    <property type="project" value="TreeGrafter"/>
</dbReference>
<dbReference type="GO" id="GO:0005313">
    <property type="term" value="F:L-glutamate transmembrane transporter activity"/>
    <property type="evidence" value="ECO:0007669"/>
    <property type="project" value="TreeGrafter"/>
</dbReference>
<dbReference type="GO" id="GO:0015175">
    <property type="term" value="F:neutral L-amino acid transmembrane transporter activity"/>
    <property type="evidence" value="ECO:0007669"/>
    <property type="project" value="TreeGrafter"/>
</dbReference>
<dbReference type="FunFam" id="1.10.3860.10:FF:000002">
    <property type="entry name" value="Amino acid transporter"/>
    <property type="match status" value="1"/>
</dbReference>
<dbReference type="Gene3D" id="1.10.3860.10">
    <property type="entry name" value="Sodium:dicarboxylate symporter"/>
    <property type="match status" value="1"/>
</dbReference>
<dbReference type="InterPro" id="IPR050746">
    <property type="entry name" value="DAACS"/>
</dbReference>
<dbReference type="InterPro" id="IPR001991">
    <property type="entry name" value="Na-dicarboxylate_symporter"/>
</dbReference>
<dbReference type="InterPro" id="IPR018107">
    <property type="entry name" value="Na-dicarboxylate_symporter_CS"/>
</dbReference>
<dbReference type="InterPro" id="IPR036458">
    <property type="entry name" value="Na:dicarbo_symporter_sf"/>
</dbReference>
<dbReference type="PANTHER" id="PTHR11958:SF110">
    <property type="entry name" value="EXCITATORY AMINO ACID TRANSPORTER"/>
    <property type="match status" value="1"/>
</dbReference>
<dbReference type="PANTHER" id="PTHR11958">
    <property type="entry name" value="SODIUM/DICARBOXYLATE SYMPORTER-RELATED"/>
    <property type="match status" value="1"/>
</dbReference>
<dbReference type="Pfam" id="PF00375">
    <property type="entry name" value="SDF"/>
    <property type="match status" value="1"/>
</dbReference>
<dbReference type="PRINTS" id="PR00173">
    <property type="entry name" value="EDTRNSPORT"/>
</dbReference>
<dbReference type="SUPFAM" id="SSF118215">
    <property type="entry name" value="Proton glutamate symport protein"/>
    <property type="match status" value="1"/>
</dbReference>
<dbReference type="PROSITE" id="PS00713">
    <property type="entry name" value="NA_DICARBOXYL_SYMP_1"/>
    <property type="match status" value="1"/>
</dbReference>
<dbReference type="PROSITE" id="PS00714">
    <property type="entry name" value="NA_DICARBOXYL_SYMP_2"/>
    <property type="match status" value="1"/>
</dbReference>
<gene>
    <name type="primary">GLT-1</name>
</gene>
<protein>
    <recommendedName>
        <fullName>Excitatory amino acid transporter</fullName>
    </recommendedName>
    <alternativeName>
        <fullName>Sodium-dependent glutamate/ aspartate transporter</fullName>
    </alternativeName>
</protein>
<organism>
    <name type="scientific">Onchocerca volvulus</name>
    <dbReference type="NCBI Taxonomy" id="6282"/>
    <lineage>
        <taxon>Eukaryota</taxon>
        <taxon>Metazoa</taxon>
        <taxon>Ecdysozoa</taxon>
        <taxon>Nematoda</taxon>
        <taxon>Chromadorea</taxon>
        <taxon>Rhabditida</taxon>
        <taxon>Spirurina</taxon>
        <taxon>Spiruromorpha</taxon>
        <taxon>Filarioidea</taxon>
        <taxon>Onchocercidae</taxon>
        <taxon>Onchocerca</taxon>
    </lineage>
</organism>
<reference key="1">
    <citation type="journal article" date="1996" name="Mol. Biochem. Parasitol.">
        <title>Cloning and characterization of cDNAs encoding putative glutamate transporters from Caenorhabditis elegans and Onchocerca volvulus.</title>
        <authorList>
            <person name="Radice A.D."/>
            <person name="Lustigman S."/>
        </authorList>
    </citation>
    <scope>NUCLEOTIDE SEQUENCE [MRNA]</scope>
</reference>
<keyword id="KW-0325">Glycoprotein</keyword>
<keyword id="KW-0472">Membrane</keyword>
<keyword id="KW-1185">Reference proteome</keyword>
<keyword id="KW-0769">Symport</keyword>
<keyword id="KW-0812">Transmembrane</keyword>
<keyword id="KW-1133">Transmembrane helix</keyword>
<keyword id="KW-0813">Transport</keyword>